<evidence type="ECO:0000255" key="1">
    <source>
        <dbReference type="HAMAP-Rule" id="MF_00086"/>
    </source>
</evidence>
<organism>
    <name type="scientific">Parasynechococcus marenigrum (strain WH8102)</name>
    <dbReference type="NCBI Taxonomy" id="84588"/>
    <lineage>
        <taxon>Bacteria</taxon>
        <taxon>Bacillati</taxon>
        <taxon>Cyanobacteriota</taxon>
        <taxon>Cyanophyceae</taxon>
        <taxon>Synechococcales</taxon>
        <taxon>Prochlorococcaceae</taxon>
        <taxon>Parasynechococcus</taxon>
        <taxon>Parasynechococcus marenigrum</taxon>
    </lineage>
</organism>
<comment type="function">
    <text evidence="1">Catalyzes the formation of S-adenosylmethionine (AdoMet) from methionine and ATP. The overall synthetic reaction is composed of two sequential steps, AdoMet formation and the subsequent tripolyphosphate hydrolysis which occurs prior to release of AdoMet from the enzyme.</text>
</comment>
<comment type="catalytic activity">
    <reaction evidence="1">
        <text>L-methionine + ATP + H2O = S-adenosyl-L-methionine + phosphate + diphosphate</text>
        <dbReference type="Rhea" id="RHEA:21080"/>
        <dbReference type="ChEBI" id="CHEBI:15377"/>
        <dbReference type="ChEBI" id="CHEBI:30616"/>
        <dbReference type="ChEBI" id="CHEBI:33019"/>
        <dbReference type="ChEBI" id="CHEBI:43474"/>
        <dbReference type="ChEBI" id="CHEBI:57844"/>
        <dbReference type="ChEBI" id="CHEBI:59789"/>
        <dbReference type="EC" id="2.5.1.6"/>
    </reaction>
</comment>
<comment type="cofactor">
    <cofactor evidence="1">
        <name>Mg(2+)</name>
        <dbReference type="ChEBI" id="CHEBI:18420"/>
    </cofactor>
    <text evidence="1">Binds 2 divalent ions per subunit.</text>
</comment>
<comment type="cofactor">
    <cofactor evidence="1">
        <name>K(+)</name>
        <dbReference type="ChEBI" id="CHEBI:29103"/>
    </cofactor>
    <text evidence="1">Binds 1 potassium ion per subunit.</text>
</comment>
<comment type="pathway">
    <text evidence="1">Amino-acid biosynthesis; S-adenosyl-L-methionine biosynthesis; S-adenosyl-L-methionine from L-methionine: step 1/1.</text>
</comment>
<comment type="subunit">
    <text evidence="1">Homotetramer; dimer of dimers.</text>
</comment>
<comment type="subcellular location">
    <subcellularLocation>
        <location evidence="1">Cytoplasm</location>
    </subcellularLocation>
</comment>
<comment type="similarity">
    <text evidence="1">Belongs to the AdoMet synthase family.</text>
</comment>
<sequence length="419" mass="44911">MSRYVFTSESVTEGHPDKICDQVSDAVLDALLAQDPSSRVACETVVNTGLCMITGEVTSKAQVDFIHLVRNVIKEIGYSGARAGGFDANSCAVLVALDQQSPDIAQGVDEADDHEGDPLDRVGAGDQGIMFGYACNETPELMPLPISLAHRLAKRLAEVRHNGSLEYLLPDGKTQVSVVYENDKPVAIDTILISTQHTAEVAGISDEQGIRERITEDLWTHVVEPATADLALKPSREATKYLVNPTGKFVVGGPQGDAGLTGRKIIVDTYGGYARHGGGAFSGKDPTKVDRSAAYAARYVAKCLVASGLAERAEVQLSYAIGVAKPVSILVESFGTGKVSNAELTELVQEHFDLRPGAIIETFGLRNLPQQRGGRFYQDTAAYGHFGRNDLKAPWEDVAAKSEELVKAEAKRIKQGATV</sequence>
<gene>
    <name evidence="1" type="primary">metK</name>
    <name type="ordered locus">SYNW1987</name>
</gene>
<accession>Q7U4S6</accession>
<keyword id="KW-0067">ATP-binding</keyword>
<keyword id="KW-0963">Cytoplasm</keyword>
<keyword id="KW-0460">Magnesium</keyword>
<keyword id="KW-0479">Metal-binding</keyword>
<keyword id="KW-0547">Nucleotide-binding</keyword>
<keyword id="KW-0554">One-carbon metabolism</keyword>
<keyword id="KW-0630">Potassium</keyword>
<keyword id="KW-0808">Transferase</keyword>
<name>METK_PARMW</name>
<feature type="chain" id="PRO_0000174611" description="S-adenosylmethionine synthase">
    <location>
        <begin position="1"/>
        <end position="419"/>
    </location>
</feature>
<feature type="region of interest" description="Flexible loop" evidence="1">
    <location>
        <begin position="100"/>
        <end position="110"/>
    </location>
</feature>
<feature type="binding site" description="in other chain" evidence="1">
    <location>
        <position position="15"/>
    </location>
    <ligand>
        <name>ATP</name>
        <dbReference type="ChEBI" id="CHEBI:30616"/>
        <note>ligand shared between two neighboring subunits</note>
    </ligand>
</feature>
<feature type="binding site" evidence="1">
    <location>
        <position position="17"/>
    </location>
    <ligand>
        <name>Mg(2+)</name>
        <dbReference type="ChEBI" id="CHEBI:18420"/>
    </ligand>
</feature>
<feature type="binding site" evidence="1">
    <location>
        <position position="43"/>
    </location>
    <ligand>
        <name>K(+)</name>
        <dbReference type="ChEBI" id="CHEBI:29103"/>
    </ligand>
</feature>
<feature type="binding site" description="in other chain" evidence="1">
    <location>
        <position position="56"/>
    </location>
    <ligand>
        <name>L-methionine</name>
        <dbReference type="ChEBI" id="CHEBI:57844"/>
        <note>ligand shared between two neighboring subunits</note>
    </ligand>
</feature>
<feature type="binding site" description="in other chain" evidence="1">
    <location>
        <position position="100"/>
    </location>
    <ligand>
        <name>L-methionine</name>
        <dbReference type="ChEBI" id="CHEBI:57844"/>
        <note>ligand shared between two neighboring subunits</note>
    </ligand>
</feature>
<feature type="binding site" description="in other chain" evidence="1">
    <location>
        <begin position="171"/>
        <end position="173"/>
    </location>
    <ligand>
        <name>ATP</name>
        <dbReference type="ChEBI" id="CHEBI:30616"/>
        <note>ligand shared between two neighboring subunits</note>
    </ligand>
</feature>
<feature type="binding site" description="in other chain" evidence="1">
    <location>
        <begin position="248"/>
        <end position="249"/>
    </location>
    <ligand>
        <name>ATP</name>
        <dbReference type="ChEBI" id="CHEBI:30616"/>
        <note>ligand shared between two neighboring subunits</note>
    </ligand>
</feature>
<feature type="binding site" evidence="1">
    <location>
        <position position="257"/>
    </location>
    <ligand>
        <name>ATP</name>
        <dbReference type="ChEBI" id="CHEBI:30616"/>
        <note>ligand shared between two neighboring subunits</note>
    </ligand>
</feature>
<feature type="binding site" evidence="1">
    <location>
        <position position="257"/>
    </location>
    <ligand>
        <name>L-methionine</name>
        <dbReference type="ChEBI" id="CHEBI:57844"/>
        <note>ligand shared between two neighboring subunits</note>
    </ligand>
</feature>
<feature type="binding site" description="in other chain" evidence="1">
    <location>
        <begin position="263"/>
        <end position="264"/>
    </location>
    <ligand>
        <name>ATP</name>
        <dbReference type="ChEBI" id="CHEBI:30616"/>
        <note>ligand shared between two neighboring subunits</note>
    </ligand>
</feature>
<feature type="binding site" evidence="1">
    <location>
        <position position="280"/>
    </location>
    <ligand>
        <name>ATP</name>
        <dbReference type="ChEBI" id="CHEBI:30616"/>
        <note>ligand shared between two neighboring subunits</note>
    </ligand>
</feature>
<feature type="binding site" evidence="1">
    <location>
        <position position="284"/>
    </location>
    <ligand>
        <name>ATP</name>
        <dbReference type="ChEBI" id="CHEBI:30616"/>
        <note>ligand shared between two neighboring subunits</note>
    </ligand>
</feature>
<feature type="binding site" description="in other chain" evidence="1">
    <location>
        <position position="288"/>
    </location>
    <ligand>
        <name>L-methionine</name>
        <dbReference type="ChEBI" id="CHEBI:57844"/>
        <note>ligand shared between two neighboring subunits</note>
    </ligand>
</feature>
<dbReference type="EC" id="2.5.1.6" evidence="1"/>
<dbReference type="EMBL" id="BX569694">
    <property type="protein sequence ID" value="CAE08502.1"/>
    <property type="molecule type" value="Genomic_DNA"/>
</dbReference>
<dbReference type="RefSeq" id="WP_011128845.1">
    <property type="nucleotide sequence ID" value="NC_005070.1"/>
</dbReference>
<dbReference type="SMR" id="Q7U4S6"/>
<dbReference type="STRING" id="84588.SYNW1987"/>
<dbReference type="KEGG" id="syw:SYNW1987"/>
<dbReference type="eggNOG" id="COG0192">
    <property type="taxonomic scope" value="Bacteria"/>
</dbReference>
<dbReference type="HOGENOM" id="CLU_041802_1_1_3"/>
<dbReference type="UniPathway" id="UPA00315">
    <property type="reaction ID" value="UER00080"/>
</dbReference>
<dbReference type="Proteomes" id="UP000001422">
    <property type="component" value="Chromosome"/>
</dbReference>
<dbReference type="GO" id="GO:0005737">
    <property type="term" value="C:cytoplasm"/>
    <property type="evidence" value="ECO:0007669"/>
    <property type="project" value="UniProtKB-SubCell"/>
</dbReference>
<dbReference type="GO" id="GO:0005524">
    <property type="term" value="F:ATP binding"/>
    <property type="evidence" value="ECO:0007669"/>
    <property type="project" value="UniProtKB-UniRule"/>
</dbReference>
<dbReference type="GO" id="GO:0000287">
    <property type="term" value="F:magnesium ion binding"/>
    <property type="evidence" value="ECO:0007669"/>
    <property type="project" value="UniProtKB-UniRule"/>
</dbReference>
<dbReference type="GO" id="GO:0004478">
    <property type="term" value="F:methionine adenosyltransferase activity"/>
    <property type="evidence" value="ECO:0007669"/>
    <property type="project" value="UniProtKB-UniRule"/>
</dbReference>
<dbReference type="GO" id="GO:0006730">
    <property type="term" value="P:one-carbon metabolic process"/>
    <property type="evidence" value="ECO:0007669"/>
    <property type="project" value="UniProtKB-KW"/>
</dbReference>
<dbReference type="GO" id="GO:0006556">
    <property type="term" value="P:S-adenosylmethionine biosynthetic process"/>
    <property type="evidence" value="ECO:0007669"/>
    <property type="project" value="UniProtKB-UniRule"/>
</dbReference>
<dbReference type="CDD" id="cd18079">
    <property type="entry name" value="S-AdoMet_synt"/>
    <property type="match status" value="1"/>
</dbReference>
<dbReference type="FunFam" id="3.30.300.10:FF:000003">
    <property type="entry name" value="S-adenosylmethionine synthase"/>
    <property type="match status" value="1"/>
</dbReference>
<dbReference type="Gene3D" id="3.30.300.10">
    <property type="match status" value="3"/>
</dbReference>
<dbReference type="HAMAP" id="MF_00086">
    <property type="entry name" value="S_AdoMet_synth1"/>
    <property type="match status" value="1"/>
</dbReference>
<dbReference type="InterPro" id="IPR022631">
    <property type="entry name" value="ADOMET_SYNTHASE_CS"/>
</dbReference>
<dbReference type="InterPro" id="IPR022630">
    <property type="entry name" value="S-AdoMet_synt_C"/>
</dbReference>
<dbReference type="InterPro" id="IPR022629">
    <property type="entry name" value="S-AdoMet_synt_central"/>
</dbReference>
<dbReference type="InterPro" id="IPR022628">
    <property type="entry name" value="S-AdoMet_synt_N"/>
</dbReference>
<dbReference type="InterPro" id="IPR002133">
    <property type="entry name" value="S-AdoMet_synthetase"/>
</dbReference>
<dbReference type="InterPro" id="IPR022636">
    <property type="entry name" value="S-AdoMet_synthetase_sfam"/>
</dbReference>
<dbReference type="NCBIfam" id="TIGR01034">
    <property type="entry name" value="metK"/>
    <property type="match status" value="1"/>
</dbReference>
<dbReference type="PANTHER" id="PTHR11964">
    <property type="entry name" value="S-ADENOSYLMETHIONINE SYNTHETASE"/>
    <property type="match status" value="1"/>
</dbReference>
<dbReference type="Pfam" id="PF02773">
    <property type="entry name" value="S-AdoMet_synt_C"/>
    <property type="match status" value="1"/>
</dbReference>
<dbReference type="Pfam" id="PF02772">
    <property type="entry name" value="S-AdoMet_synt_M"/>
    <property type="match status" value="1"/>
</dbReference>
<dbReference type="Pfam" id="PF00438">
    <property type="entry name" value="S-AdoMet_synt_N"/>
    <property type="match status" value="1"/>
</dbReference>
<dbReference type="PIRSF" id="PIRSF000497">
    <property type="entry name" value="MAT"/>
    <property type="match status" value="1"/>
</dbReference>
<dbReference type="SUPFAM" id="SSF55973">
    <property type="entry name" value="S-adenosylmethionine synthetase"/>
    <property type="match status" value="3"/>
</dbReference>
<dbReference type="PROSITE" id="PS00376">
    <property type="entry name" value="ADOMET_SYNTHASE_1"/>
    <property type="match status" value="1"/>
</dbReference>
<dbReference type="PROSITE" id="PS00377">
    <property type="entry name" value="ADOMET_SYNTHASE_2"/>
    <property type="match status" value="1"/>
</dbReference>
<reference key="1">
    <citation type="journal article" date="2003" name="Nature">
        <title>The genome of a motile marine Synechococcus.</title>
        <authorList>
            <person name="Palenik B."/>
            <person name="Brahamsha B."/>
            <person name="Larimer F.W."/>
            <person name="Land M.L."/>
            <person name="Hauser L."/>
            <person name="Chain P."/>
            <person name="Lamerdin J.E."/>
            <person name="Regala W."/>
            <person name="Allen E.E."/>
            <person name="McCarren J."/>
            <person name="Paulsen I.T."/>
            <person name="Dufresne A."/>
            <person name="Partensky F."/>
            <person name="Webb E.A."/>
            <person name="Waterbury J."/>
        </authorList>
    </citation>
    <scope>NUCLEOTIDE SEQUENCE [LARGE SCALE GENOMIC DNA]</scope>
    <source>
        <strain>WH8102</strain>
    </source>
</reference>
<protein>
    <recommendedName>
        <fullName evidence="1">S-adenosylmethionine synthase</fullName>
        <shortName evidence="1">AdoMet synthase</shortName>
        <ecNumber evidence="1">2.5.1.6</ecNumber>
    </recommendedName>
    <alternativeName>
        <fullName evidence="1">MAT</fullName>
    </alternativeName>
    <alternativeName>
        <fullName evidence="1">Methionine adenosyltransferase</fullName>
    </alternativeName>
</protein>
<proteinExistence type="inferred from homology"/>